<sequence length="121" mass="13014">MKTLAAFLLLSCLIAGEVNGQDRSSRARCFCVDKGLNMVLLKNLDKVEIFPPSPSCNKHEIVVTLKNGAGQKCLNPDSKFTKNVVLKAIGKRMQQSVPHSTTTGTVKSSMTSSTSAPTAFK</sequence>
<keyword id="KW-0145">Chemotaxis</keyword>
<keyword id="KW-0202">Cytokine</keyword>
<keyword id="KW-1015">Disulfide bond</keyword>
<keyword id="KW-1185">Reference proteome</keyword>
<keyword id="KW-0964">Secreted</keyword>
<keyword id="KW-0732">Signal</keyword>
<proteinExistence type="evidence at transcript level"/>
<gene>
    <name evidence="9" type="primary">cxcl11.6</name>
    <name evidence="5" type="synonym">cxcl11af</name>
</gene>
<feature type="signal peptide" evidence="2">
    <location>
        <begin position="1"/>
        <end position="20"/>
    </location>
</feature>
<feature type="chain" id="PRO_5005122365" description="C-X-C motif chemokine 11-6">
    <location>
        <begin position="21"/>
        <end position="121"/>
    </location>
</feature>
<feature type="region of interest" description="Disordered" evidence="3">
    <location>
        <begin position="95"/>
        <end position="121"/>
    </location>
</feature>
<feature type="compositionally biased region" description="Low complexity" evidence="3">
    <location>
        <begin position="100"/>
        <end position="115"/>
    </location>
</feature>
<feature type="disulfide bond" evidence="1">
    <location>
        <begin position="29"/>
        <end position="56"/>
    </location>
</feature>
<feature type="disulfide bond" evidence="1">
    <location>
        <begin position="31"/>
        <end position="73"/>
    </location>
</feature>
<name>CX116_DANRE</name>
<organism evidence="8">
    <name type="scientific">Danio rerio</name>
    <name type="common">Zebrafish</name>
    <name type="synonym">Brachydanio rerio</name>
    <dbReference type="NCBI Taxonomy" id="7955"/>
    <lineage>
        <taxon>Eukaryota</taxon>
        <taxon>Metazoa</taxon>
        <taxon>Chordata</taxon>
        <taxon>Craniata</taxon>
        <taxon>Vertebrata</taxon>
        <taxon>Euteleostomi</taxon>
        <taxon>Actinopterygii</taxon>
        <taxon>Neopterygii</taxon>
        <taxon>Teleostei</taxon>
        <taxon>Ostariophysi</taxon>
        <taxon>Cypriniformes</taxon>
        <taxon>Danionidae</taxon>
        <taxon>Danioninae</taxon>
        <taxon>Danio</taxon>
    </lineage>
</organism>
<accession>B0R191</accession>
<dbReference type="EMBL" id="AL953908">
    <property type="status" value="NOT_ANNOTATED_CDS"/>
    <property type="molecule type" value="Genomic_DNA"/>
</dbReference>
<dbReference type="RefSeq" id="NP_001410792.1">
    <property type="nucleotide sequence ID" value="NM_001423863.1"/>
</dbReference>
<dbReference type="RefSeq" id="XP_005165468.1">
    <property type="nucleotide sequence ID" value="XM_005165411.3"/>
</dbReference>
<dbReference type="SMR" id="B0R191"/>
<dbReference type="FunCoup" id="B0R191">
    <property type="interactions" value="903"/>
</dbReference>
<dbReference type="STRING" id="7955.ENSDARP00000112794"/>
<dbReference type="PaxDb" id="7955-ENSDARP00000112794"/>
<dbReference type="Ensembl" id="ENSDART00000138213">
    <property type="protein sequence ID" value="ENSDARP00000112794"/>
    <property type="gene ID" value="ENSDARG00000094706"/>
</dbReference>
<dbReference type="Ensembl" id="ENSDART00000181939">
    <property type="protein sequence ID" value="ENSDARP00000147964"/>
    <property type="gene ID" value="ENSDARG00000093779"/>
</dbReference>
<dbReference type="Ensembl" id="ENSDART00000183041">
    <property type="protein sequence ID" value="ENSDARP00000152492"/>
    <property type="gene ID" value="ENSDARG00000116337"/>
</dbReference>
<dbReference type="GeneID" id="101883610"/>
<dbReference type="AGR" id="ZFIN:ZDB-GENE-060526-78"/>
<dbReference type="ZFIN" id="ZDB-GENE-060526-78">
    <property type="gene designation" value="cxcl11.6"/>
</dbReference>
<dbReference type="eggNOG" id="ENOG502SGFE">
    <property type="taxonomic scope" value="Eukaryota"/>
</dbReference>
<dbReference type="HOGENOM" id="CLU_143902_2_1_1"/>
<dbReference type="InParanoid" id="B0R191"/>
<dbReference type="OMA" id="TCQKVEI"/>
<dbReference type="OrthoDB" id="8872899at2759"/>
<dbReference type="PhylomeDB" id="B0R191"/>
<dbReference type="TreeFam" id="TF333433"/>
<dbReference type="Reactome" id="R-DRE-380108">
    <property type="pathway name" value="Chemokine receptors bind chemokines"/>
</dbReference>
<dbReference type="Reactome" id="R-DRE-418594">
    <property type="pathway name" value="G alpha (i) signalling events"/>
</dbReference>
<dbReference type="PRO" id="PR:B0R191"/>
<dbReference type="Proteomes" id="UP000000437">
    <property type="component" value="Alternate scaffold 5"/>
</dbReference>
<dbReference type="Proteomes" id="UP000000437">
    <property type="component" value="Chromosome 5"/>
</dbReference>
<dbReference type="Bgee" id="ENSDARG00000093779">
    <property type="expression patterns" value="Expressed in spleen and 13 other cell types or tissues"/>
</dbReference>
<dbReference type="ExpressionAtlas" id="B0R191">
    <property type="expression patterns" value="differential"/>
</dbReference>
<dbReference type="GO" id="GO:0005615">
    <property type="term" value="C:extracellular space"/>
    <property type="evidence" value="ECO:0007669"/>
    <property type="project" value="UniProtKB-KW"/>
</dbReference>
<dbReference type="GO" id="GO:0042056">
    <property type="term" value="F:chemoattractant activity"/>
    <property type="evidence" value="ECO:0000314"/>
    <property type="project" value="ZFIN"/>
</dbReference>
<dbReference type="GO" id="GO:0008009">
    <property type="term" value="F:chemokine activity"/>
    <property type="evidence" value="ECO:0007669"/>
    <property type="project" value="InterPro"/>
</dbReference>
<dbReference type="GO" id="GO:0006952">
    <property type="term" value="P:defense response"/>
    <property type="evidence" value="ECO:0007669"/>
    <property type="project" value="InterPro"/>
</dbReference>
<dbReference type="GO" id="GO:0006955">
    <property type="term" value="P:immune response"/>
    <property type="evidence" value="ECO:0007669"/>
    <property type="project" value="InterPro"/>
</dbReference>
<dbReference type="CDD" id="cd00273">
    <property type="entry name" value="Chemokine_CXC"/>
    <property type="match status" value="1"/>
</dbReference>
<dbReference type="FunFam" id="2.40.50.40:FF:000004">
    <property type="entry name" value="C-X-C motif chemokine"/>
    <property type="match status" value="1"/>
</dbReference>
<dbReference type="Gene3D" id="2.40.50.40">
    <property type="match status" value="1"/>
</dbReference>
<dbReference type="InterPro" id="IPR039809">
    <property type="entry name" value="Chemokine_b/g/d"/>
</dbReference>
<dbReference type="InterPro" id="IPR001089">
    <property type="entry name" value="Chemokine_CXC"/>
</dbReference>
<dbReference type="InterPro" id="IPR018048">
    <property type="entry name" value="Chemokine_CXC_CS"/>
</dbReference>
<dbReference type="InterPro" id="IPR001811">
    <property type="entry name" value="Chemokine_IL8-like_dom"/>
</dbReference>
<dbReference type="InterPro" id="IPR033899">
    <property type="entry name" value="CXC_Chemokine_domain"/>
</dbReference>
<dbReference type="InterPro" id="IPR036048">
    <property type="entry name" value="Interleukin_8-like_sf"/>
</dbReference>
<dbReference type="PANTHER" id="PTHR12015:SF191">
    <property type="entry name" value="C-X-C MOTIF CHEMOKINE 11"/>
    <property type="match status" value="1"/>
</dbReference>
<dbReference type="PANTHER" id="PTHR12015">
    <property type="entry name" value="SMALL INDUCIBLE CYTOKINE A"/>
    <property type="match status" value="1"/>
</dbReference>
<dbReference type="Pfam" id="PF00048">
    <property type="entry name" value="IL8"/>
    <property type="match status" value="1"/>
</dbReference>
<dbReference type="PRINTS" id="PR00436">
    <property type="entry name" value="INTERLEUKIN8"/>
</dbReference>
<dbReference type="PRINTS" id="PR00437">
    <property type="entry name" value="SMALLCYTKCXC"/>
</dbReference>
<dbReference type="SMART" id="SM00199">
    <property type="entry name" value="SCY"/>
    <property type="match status" value="1"/>
</dbReference>
<dbReference type="SUPFAM" id="SSF54117">
    <property type="entry name" value="Interleukin 8-like chemokines"/>
    <property type="match status" value="1"/>
</dbReference>
<dbReference type="PROSITE" id="PS00471">
    <property type="entry name" value="SMALL_CYTOKINES_CXC"/>
    <property type="match status" value="1"/>
</dbReference>
<comment type="function">
    <text evidence="4">Ligand for cxcr3.2. Chemotactic for macrophages.</text>
</comment>
<comment type="subcellular location">
    <subcellularLocation>
        <location evidence="7">Secreted</location>
    </subcellularLocation>
</comment>
<comment type="induction">
    <text evidence="4">Up-regulated in response to bacterial infection by S.typhimurium or M.marinum.</text>
</comment>
<comment type="similarity">
    <text evidence="6">Belongs to the intercrine alpha (chemokine CxC) family.</text>
</comment>
<reference evidence="8" key="1">
    <citation type="journal article" date="2013" name="Nature">
        <title>The zebrafish reference genome sequence and its relationship to the human genome.</title>
        <authorList>
            <person name="Howe K."/>
            <person name="Clark M.D."/>
            <person name="Torroja C.F."/>
            <person name="Torrance J."/>
            <person name="Berthelot C."/>
            <person name="Muffato M."/>
            <person name="Collins J.E."/>
            <person name="Humphray S."/>
            <person name="McLaren K."/>
            <person name="Matthews L."/>
            <person name="McLaren S."/>
            <person name="Sealy I."/>
            <person name="Caccamo M."/>
            <person name="Churcher C."/>
            <person name="Scott C."/>
            <person name="Barrett J.C."/>
            <person name="Koch R."/>
            <person name="Rauch G.J."/>
            <person name="White S."/>
            <person name="Chow W."/>
            <person name="Kilian B."/>
            <person name="Quintais L.T."/>
            <person name="Guerra-Assuncao J.A."/>
            <person name="Zhou Y."/>
            <person name="Gu Y."/>
            <person name="Yen J."/>
            <person name="Vogel J.H."/>
            <person name="Eyre T."/>
            <person name="Redmond S."/>
            <person name="Banerjee R."/>
            <person name="Chi J."/>
            <person name="Fu B."/>
            <person name="Langley E."/>
            <person name="Maguire S.F."/>
            <person name="Laird G.K."/>
            <person name="Lloyd D."/>
            <person name="Kenyon E."/>
            <person name="Donaldson S."/>
            <person name="Sehra H."/>
            <person name="Almeida-King J."/>
            <person name="Loveland J."/>
            <person name="Trevanion S."/>
            <person name="Jones M."/>
            <person name="Quail M."/>
            <person name="Willey D."/>
            <person name="Hunt A."/>
            <person name="Burton J."/>
            <person name="Sims S."/>
            <person name="McLay K."/>
            <person name="Plumb B."/>
            <person name="Davis J."/>
            <person name="Clee C."/>
            <person name="Oliver K."/>
            <person name="Clark R."/>
            <person name="Riddle C."/>
            <person name="Elliot D."/>
            <person name="Threadgold G."/>
            <person name="Harden G."/>
            <person name="Ware D."/>
            <person name="Begum S."/>
            <person name="Mortimore B."/>
            <person name="Kerry G."/>
            <person name="Heath P."/>
            <person name="Phillimore B."/>
            <person name="Tracey A."/>
            <person name="Corby N."/>
            <person name="Dunn M."/>
            <person name="Johnson C."/>
            <person name="Wood J."/>
            <person name="Clark S."/>
            <person name="Pelan S."/>
            <person name="Griffiths G."/>
            <person name="Smith M."/>
            <person name="Glithero R."/>
            <person name="Howden P."/>
            <person name="Barker N."/>
            <person name="Lloyd C."/>
            <person name="Stevens C."/>
            <person name="Harley J."/>
            <person name="Holt K."/>
            <person name="Panagiotidis G."/>
            <person name="Lovell J."/>
            <person name="Beasley H."/>
            <person name="Henderson C."/>
            <person name="Gordon D."/>
            <person name="Auger K."/>
            <person name="Wright D."/>
            <person name="Collins J."/>
            <person name="Raisen C."/>
            <person name="Dyer L."/>
            <person name="Leung K."/>
            <person name="Robertson L."/>
            <person name="Ambridge K."/>
            <person name="Leongamornlert D."/>
            <person name="McGuire S."/>
            <person name="Gilderthorp R."/>
            <person name="Griffiths C."/>
            <person name="Manthravadi D."/>
            <person name="Nichol S."/>
            <person name="Barker G."/>
            <person name="Whitehead S."/>
            <person name="Kay M."/>
            <person name="Brown J."/>
            <person name="Murnane C."/>
            <person name="Gray E."/>
            <person name="Humphries M."/>
            <person name="Sycamore N."/>
            <person name="Barker D."/>
            <person name="Saunders D."/>
            <person name="Wallis J."/>
            <person name="Babbage A."/>
            <person name="Hammond S."/>
            <person name="Mashreghi-Mohammadi M."/>
            <person name="Barr L."/>
            <person name="Martin S."/>
            <person name="Wray P."/>
            <person name="Ellington A."/>
            <person name="Matthews N."/>
            <person name="Ellwood M."/>
            <person name="Woodmansey R."/>
            <person name="Clark G."/>
            <person name="Cooper J."/>
            <person name="Tromans A."/>
            <person name="Grafham D."/>
            <person name="Skuce C."/>
            <person name="Pandian R."/>
            <person name="Andrews R."/>
            <person name="Harrison E."/>
            <person name="Kimberley A."/>
            <person name="Garnett J."/>
            <person name="Fosker N."/>
            <person name="Hall R."/>
            <person name="Garner P."/>
            <person name="Kelly D."/>
            <person name="Bird C."/>
            <person name="Palmer S."/>
            <person name="Gehring I."/>
            <person name="Berger A."/>
            <person name="Dooley C.M."/>
            <person name="Ersan-Urun Z."/>
            <person name="Eser C."/>
            <person name="Geiger H."/>
            <person name="Geisler M."/>
            <person name="Karotki L."/>
            <person name="Kirn A."/>
            <person name="Konantz J."/>
            <person name="Konantz M."/>
            <person name="Oberlander M."/>
            <person name="Rudolph-Geiger S."/>
            <person name="Teucke M."/>
            <person name="Lanz C."/>
            <person name="Raddatz G."/>
            <person name="Osoegawa K."/>
            <person name="Zhu B."/>
            <person name="Rapp A."/>
            <person name="Widaa S."/>
            <person name="Langford C."/>
            <person name="Yang F."/>
            <person name="Schuster S.C."/>
            <person name="Carter N.P."/>
            <person name="Harrow J."/>
            <person name="Ning Z."/>
            <person name="Herrero J."/>
            <person name="Searle S.M."/>
            <person name="Enright A."/>
            <person name="Geisler R."/>
            <person name="Plasterk R.H."/>
            <person name="Lee C."/>
            <person name="Westerfield M."/>
            <person name="de Jong P.J."/>
            <person name="Zon L.I."/>
            <person name="Postlethwait J.H."/>
            <person name="Nusslein-Volhard C."/>
            <person name="Hubbard T.J."/>
            <person name="Roest Crollius H."/>
            <person name="Rogers J."/>
            <person name="Stemple D.L."/>
        </authorList>
    </citation>
    <scope>NUCLEOTIDE SEQUENCE [LARGE SCALE GENOMIC DNA]</scope>
    <source>
        <strain evidence="8">Tuebingen</strain>
    </source>
</reference>
<reference evidence="6" key="2">
    <citation type="journal article" date="2015" name="Dis. Model. Mech.">
        <title>The CXCR3-CXCL11 signaling axis mediates macrophage recruitment and dissemination of mycobacterial infection.</title>
        <authorList>
            <person name="Torraca V."/>
            <person name="Cui C."/>
            <person name="Boland R."/>
            <person name="Bebelman J.P."/>
            <person name="van der Sar A.M."/>
            <person name="Smit M.J."/>
            <person name="Siderius M."/>
            <person name="Spaink H.P."/>
            <person name="Meijer A.H."/>
        </authorList>
    </citation>
    <scope>FUNCTION</scope>
    <scope>SUBCELLULAR LOCATION</scope>
    <scope>INDUCTION</scope>
</reference>
<protein>
    <recommendedName>
        <fullName evidence="6">C-X-C motif chemokine 11-6</fullName>
    </recommendedName>
</protein>
<evidence type="ECO:0000250" key="1">
    <source>
        <dbReference type="UniProtKB" id="O14625"/>
    </source>
</evidence>
<evidence type="ECO:0000255" key="2"/>
<evidence type="ECO:0000256" key="3">
    <source>
        <dbReference type="SAM" id="MobiDB-lite"/>
    </source>
</evidence>
<evidence type="ECO:0000269" key="4">
    <source>
    </source>
</evidence>
<evidence type="ECO:0000303" key="5">
    <source>
    </source>
</evidence>
<evidence type="ECO:0000305" key="6"/>
<evidence type="ECO:0000305" key="7">
    <source>
    </source>
</evidence>
<evidence type="ECO:0000312" key="8">
    <source>
        <dbReference type="Proteomes" id="UP000000437"/>
    </source>
</evidence>
<evidence type="ECO:0000312" key="9">
    <source>
        <dbReference type="ZFIN" id="ZDB-GENE-060526-78"/>
    </source>
</evidence>